<keyword id="KW-1185">Reference proteome</keyword>
<sequence length="83" mass="9935">MRKGSLKEVLAKIKHDPREDERDYYIVIEHRGAYGNEKKIPVEMIELGHGYFFIGETQIPYHRIIRVVKGNGKVVWEKRRRKQ</sequence>
<evidence type="ECO:0000255" key="1">
    <source>
        <dbReference type="HAMAP-Rule" id="MF_01245"/>
    </source>
</evidence>
<reference key="1">
    <citation type="journal article" date="2007" name="Genome Biol.">
        <title>Genome analysis and genome-wide proteomics of Thermococcus gammatolerans, the most radioresistant organism known amongst the Archaea.</title>
        <authorList>
            <person name="Zivanovic Y."/>
            <person name="Armengaud J."/>
            <person name="Lagorce A."/>
            <person name="Leplat C."/>
            <person name="Guerin P."/>
            <person name="Dutertre M."/>
            <person name="Anthouard V."/>
            <person name="Forterre P."/>
            <person name="Wincker P."/>
            <person name="Confalonieri F."/>
        </authorList>
    </citation>
    <scope>NUCLEOTIDE SEQUENCE [LARGE SCALE GENOMIC DNA]</scope>
    <source>
        <strain>DSM 15229 / JCM 11827 / EJ3</strain>
    </source>
</reference>
<proteinExistence type="inferred from homology"/>
<comment type="similarity">
    <text evidence="1">Belongs to the UPF0248 family.</text>
</comment>
<name>Y1209_THEGJ</name>
<gene>
    <name type="ordered locus">TGAM_1209</name>
</gene>
<protein>
    <recommendedName>
        <fullName evidence="1">UPF0248 protein TGAM_1209</fullName>
    </recommendedName>
</protein>
<dbReference type="EMBL" id="CP001398">
    <property type="protein sequence ID" value="ACS33711.1"/>
    <property type="molecule type" value="Genomic_DNA"/>
</dbReference>
<dbReference type="RefSeq" id="WP_015858823.1">
    <property type="nucleotide sequence ID" value="NC_012804.1"/>
</dbReference>
<dbReference type="STRING" id="593117.TGAM_1209"/>
<dbReference type="PaxDb" id="593117-TGAM_1209"/>
<dbReference type="GeneID" id="7987855"/>
<dbReference type="KEGG" id="tga:TGAM_1209"/>
<dbReference type="PATRIC" id="fig|593117.10.peg.1208"/>
<dbReference type="eggNOG" id="arCOG01302">
    <property type="taxonomic scope" value="Archaea"/>
</dbReference>
<dbReference type="HOGENOM" id="CLU_172276_3_1_2"/>
<dbReference type="OrthoDB" id="14794at2157"/>
<dbReference type="Proteomes" id="UP000001488">
    <property type="component" value="Chromosome"/>
</dbReference>
<dbReference type="HAMAP" id="MF_01245">
    <property type="entry name" value="UPF0248"/>
    <property type="match status" value="1"/>
</dbReference>
<dbReference type="InterPro" id="IPR040459">
    <property type="entry name" value="MJ1316"/>
</dbReference>
<dbReference type="InterPro" id="IPR007547">
    <property type="entry name" value="UPF0248"/>
</dbReference>
<dbReference type="NCBIfam" id="NF003272">
    <property type="entry name" value="PRK04257.1"/>
    <property type="match status" value="1"/>
</dbReference>
<dbReference type="Pfam" id="PF04457">
    <property type="entry name" value="MJ1316"/>
    <property type="match status" value="1"/>
</dbReference>
<organism>
    <name type="scientific">Thermococcus gammatolerans (strain DSM 15229 / JCM 11827 / EJ3)</name>
    <dbReference type="NCBI Taxonomy" id="593117"/>
    <lineage>
        <taxon>Archaea</taxon>
        <taxon>Methanobacteriati</taxon>
        <taxon>Methanobacteriota</taxon>
        <taxon>Thermococci</taxon>
        <taxon>Thermococcales</taxon>
        <taxon>Thermococcaceae</taxon>
        <taxon>Thermococcus</taxon>
    </lineage>
</organism>
<feature type="chain" id="PRO_1000214099" description="UPF0248 protein TGAM_1209">
    <location>
        <begin position="1"/>
        <end position="83"/>
    </location>
</feature>
<accession>C5A649</accession>